<keyword id="KW-0150">Chloroplast</keyword>
<keyword id="KW-0472">Membrane</keyword>
<keyword id="KW-0602">Photosynthesis</keyword>
<keyword id="KW-0604">Photosystem II</keyword>
<keyword id="KW-0934">Plastid</keyword>
<keyword id="KW-0674">Reaction center</keyword>
<keyword id="KW-0793">Thylakoid</keyword>
<keyword id="KW-0812">Transmembrane</keyword>
<keyword id="KW-1133">Transmembrane helix</keyword>
<geneLocation type="chloroplast"/>
<reference key="1">
    <citation type="journal article" date="1999" name="J. Mol. Evol.">
        <title>The plastid genome of the cryptophyte alga, Guillardia theta: complete sequence and conserved synteny groups confirm its common ancestry with red algae.</title>
        <authorList>
            <person name="Douglas S.E."/>
            <person name="Penny S.L."/>
        </authorList>
    </citation>
    <scope>NUCLEOTIDE SEQUENCE [LARGE SCALE GENOMIC DNA]</scope>
</reference>
<proteinExistence type="inferred from homology"/>
<organism>
    <name type="scientific">Guillardia theta</name>
    <name type="common">Cryptophyte</name>
    <name type="synonym">Cryptomonas phi</name>
    <dbReference type="NCBI Taxonomy" id="55529"/>
    <lineage>
        <taxon>Eukaryota</taxon>
        <taxon>Cryptophyceae</taxon>
        <taxon>Pyrenomonadales</taxon>
        <taxon>Geminigeraceae</taxon>
        <taxon>Guillardia</taxon>
    </lineage>
</organism>
<name>PSBJ_GUITH</name>
<gene>
    <name evidence="1" type="primary">psbJ</name>
</gene>
<accession>O78463</accession>
<sequence>MASTGRIPLWIIATFGGIAALTVVGLFIYGSYSGIGSAL</sequence>
<dbReference type="EMBL" id="AF041468">
    <property type="protein sequence ID" value="AAC35654.1"/>
    <property type="molecule type" value="Genomic_DNA"/>
</dbReference>
<dbReference type="RefSeq" id="NP_050720.1">
    <property type="nucleotide sequence ID" value="NC_000926.1"/>
</dbReference>
<dbReference type="SMR" id="O78463"/>
<dbReference type="GeneID" id="857023"/>
<dbReference type="HOGENOM" id="CLU_215151_0_0_1"/>
<dbReference type="GO" id="GO:0009535">
    <property type="term" value="C:chloroplast thylakoid membrane"/>
    <property type="evidence" value="ECO:0007669"/>
    <property type="project" value="UniProtKB-SubCell"/>
</dbReference>
<dbReference type="GO" id="GO:0009539">
    <property type="term" value="C:photosystem II reaction center"/>
    <property type="evidence" value="ECO:0007669"/>
    <property type="project" value="InterPro"/>
</dbReference>
<dbReference type="GO" id="GO:0015979">
    <property type="term" value="P:photosynthesis"/>
    <property type="evidence" value="ECO:0007669"/>
    <property type="project" value="UniProtKB-UniRule"/>
</dbReference>
<dbReference type="Gene3D" id="6.10.250.2070">
    <property type="match status" value="1"/>
</dbReference>
<dbReference type="HAMAP" id="MF_01305">
    <property type="entry name" value="PSII_PsbJ"/>
    <property type="match status" value="1"/>
</dbReference>
<dbReference type="InterPro" id="IPR002682">
    <property type="entry name" value="PSII_PsbJ"/>
</dbReference>
<dbReference type="InterPro" id="IPR037267">
    <property type="entry name" value="PSII_PsbJ_sf"/>
</dbReference>
<dbReference type="NCBIfam" id="NF002722">
    <property type="entry name" value="PRK02565.1"/>
    <property type="match status" value="1"/>
</dbReference>
<dbReference type="PANTHER" id="PTHR34812">
    <property type="entry name" value="PHOTOSYSTEM II REACTION CENTER PROTEIN J"/>
    <property type="match status" value="1"/>
</dbReference>
<dbReference type="PANTHER" id="PTHR34812:SF3">
    <property type="entry name" value="PHOTOSYSTEM II REACTION CENTER PROTEIN J"/>
    <property type="match status" value="1"/>
</dbReference>
<dbReference type="Pfam" id="PF01788">
    <property type="entry name" value="PsbJ"/>
    <property type="match status" value="1"/>
</dbReference>
<dbReference type="SUPFAM" id="SSF161021">
    <property type="entry name" value="Photosystem II reaction center protein J, PsbJ"/>
    <property type="match status" value="1"/>
</dbReference>
<comment type="function">
    <text evidence="1">One of the components of the core complex of photosystem II (PSII). PSII is a light-driven water:plastoquinone oxidoreductase that uses light energy to abstract electrons from H(2)O, generating O(2) and a proton gradient subsequently used for ATP formation. It consists of a core antenna complex that captures photons, and an electron transfer chain that converts photonic excitation into a charge separation.</text>
</comment>
<comment type="subunit">
    <text evidence="1">PSII is composed of 1 copy each of membrane proteins PsbA, PsbB, PsbC, PsbD, PsbE, PsbF, PsbH, PsbI, PsbJ, PsbK, PsbL, PsbM, PsbT, PsbX, PsbY, PsbZ, Psb30/Ycf12, at least 3 peripheral proteins of the oxygen-evolving complex and a large number of cofactors. It forms dimeric complexes.</text>
</comment>
<comment type="subcellular location">
    <subcellularLocation>
        <location evidence="1">Plastid</location>
        <location evidence="1">Chloroplast thylakoid membrane</location>
        <topology evidence="1">Single-pass membrane protein</topology>
    </subcellularLocation>
</comment>
<comment type="similarity">
    <text evidence="1">Belongs to the PsbJ family.</text>
</comment>
<protein>
    <recommendedName>
        <fullName evidence="1">Photosystem II reaction center protein J</fullName>
        <shortName evidence="1">PSII-J</shortName>
    </recommendedName>
</protein>
<feature type="chain" id="PRO_0000216592" description="Photosystem II reaction center protein J">
    <location>
        <begin position="1"/>
        <end position="39"/>
    </location>
</feature>
<feature type="transmembrane region" description="Helical" evidence="1">
    <location>
        <begin position="9"/>
        <end position="29"/>
    </location>
</feature>
<evidence type="ECO:0000255" key="1">
    <source>
        <dbReference type="HAMAP-Rule" id="MF_01305"/>
    </source>
</evidence>